<name>EBHA_STAAM</name>
<organism>
    <name type="scientific">Staphylococcus aureus (strain Mu50 / ATCC 700699)</name>
    <dbReference type="NCBI Taxonomy" id="158878"/>
    <lineage>
        <taxon>Bacteria</taxon>
        <taxon>Bacillati</taxon>
        <taxon>Bacillota</taxon>
        <taxon>Bacilli</taxon>
        <taxon>Bacillales</taxon>
        <taxon>Staphylococcaceae</taxon>
        <taxon>Staphylococcus</taxon>
    </lineage>
</organism>
<feature type="chain" id="PRO_0000345976" description="Extracellular matrix-binding protein EbhA">
    <location>
        <begin position="1"/>
        <end position="6713"/>
    </location>
</feature>
<feature type="transmembrane region" description="Helical" evidence="1">
    <location>
        <begin position="6518"/>
        <end position="6540"/>
    </location>
</feature>
<feature type="domain" description="FIVAR 1">
    <location>
        <begin position="1"/>
        <end position="58"/>
    </location>
</feature>
<feature type="domain" description="FIVAR 2">
    <location>
        <begin position="126"/>
        <end position="184"/>
    </location>
</feature>
<feature type="domain" description="FIVAR 3">
    <location>
        <begin position="252"/>
        <end position="310"/>
    </location>
</feature>
<feature type="domain" description="FIVAR 4">
    <location>
        <begin position="378"/>
        <end position="436"/>
    </location>
</feature>
<feature type="domain" description="FIVAR 5">
    <location>
        <begin position="504"/>
        <end position="562"/>
    </location>
</feature>
<feature type="domain" description="FIVAR 6">
    <location>
        <begin position="630"/>
        <end position="688"/>
    </location>
</feature>
<feature type="domain" description="FIVAR 7">
    <location>
        <begin position="756"/>
        <end position="814"/>
    </location>
</feature>
<feature type="domain" description="FIVAR 8">
    <location>
        <begin position="882"/>
        <end position="940"/>
    </location>
</feature>
<feature type="domain" description="FIVAR 9">
    <location>
        <begin position="1008"/>
        <end position="1066"/>
    </location>
</feature>
<feature type="domain" description="FIVAR 10">
    <location>
        <begin position="1134"/>
        <end position="1192"/>
    </location>
</feature>
<feature type="domain" description="FIVAR 11">
    <location>
        <begin position="1260"/>
        <end position="1318"/>
    </location>
</feature>
<feature type="domain" description="FIVAR 12">
    <location>
        <begin position="1386"/>
        <end position="1444"/>
    </location>
</feature>
<feature type="domain" description="FIVAR 13">
    <location>
        <begin position="1512"/>
        <end position="1570"/>
    </location>
</feature>
<feature type="domain" description="FIVAR 14">
    <location>
        <begin position="1638"/>
        <end position="1696"/>
    </location>
</feature>
<feature type="domain" description="FIVAR 15">
    <location>
        <begin position="1764"/>
        <end position="1822"/>
    </location>
</feature>
<feature type="domain" description="FIVAR 16">
    <location>
        <begin position="1890"/>
        <end position="1948"/>
    </location>
</feature>
<feature type="domain" description="FIVAR 17">
    <location>
        <begin position="2142"/>
        <end position="2200"/>
    </location>
</feature>
<feature type="domain" description="FIVAR 18">
    <location>
        <begin position="2268"/>
        <end position="2325"/>
    </location>
</feature>
<feature type="domain" description="FIVAR 19">
    <location>
        <begin position="2393"/>
        <end position="2451"/>
    </location>
</feature>
<feature type="domain" description="FIVAR 20">
    <location>
        <begin position="2519"/>
        <end position="2577"/>
    </location>
</feature>
<feature type="domain" description="FIVAR 21">
    <location>
        <begin position="2645"/>
        <end position="2703"/>
    </location>
</feature>
<feature type="domain" description="FIVAR 22">
    <location>
        <begin position="2771"/>
        <end position="2829"/>
    </location>
</feature>
<feature type="domain" description="FIVAR 23">
    <location>
        <begin position="2897"/>
        <end position="2955"/>
    </location>
</feature>
<feature type="domain" description="FIVAR 24">
    <location>
        <begin position="3023"/>
        <end position="3081"/>
    </location>
</feature>
<feature type="domain" description="FIVAR 25">
    <location>
        <begin position="3149"/>
        <end position="3207"/>
    </location>
</feature>
<feature type="domain" description="FIVAR 26">
    <location>
        <begin position="3275"/>
        <end position="3333"/>
    </location>
</feature>
<feature type="domain" description="FIVAR 27">
    <location>
        <begin position="3401"/>
        <end position="3459"/>
    </location>
</feature>
<feature type="domain" description="FIVAR 28">
    <location>
        <begin position="3527"/>
        <end position="3585"/>
    </location>
</feature>
<feature type="domain" description="FIVAR 29">
    <location>
        <begin position="3653"/>
        <end position="3711"/>
    </location>
</feature>
<feature type="domain" description="FIVAR 30">
    <location>
        <begin position="3779"/>
        <end position="3837"/>
    </location>
</feature>
<feature type="domain" description="FIVAR 31">
    <location>
        <begin position="3905"/>
        <end position="3963"/>
    </location>
</feature>
<feature type="domain" description="FIVAR 32">
    <location>
        <begin position="4031"/>
        <end position="4089"/>
    </location>
</feature>
<feature type="domain" description="FIVAR 33">
    <location>
        <begin position="4157"/>
        <end position="4218"/>
    </location>
</feature>
<feature type="domain" description="FIVAR 34">
    <location>
        <begin position="4283"/>
        <end position="4341"/>
    </location>
</feature>
<feature type="domain" description="FIVAR 35">
    <location>
        <begin position="4409"/>
        <end position="4467"/>
    </location>
</feature>
<feature type="domain" description="FIVAR 36">
    <location>
        <begin position="4535"/>
        <end position="4592"/>
    </location>
</feature>
<feature type="domain" description="FIVAR 37">
    <location>
        <begin position="4660"/>
        <end position="4718"/>
    </location>
</feature>
<feature type="domain" description="FIVAR 38">
    <location>
        <begin position="4786"/>
        <end position="4844"/>
    </location>
</feature>
<feature type="domain" description="FIVAR 39">
    <location>
        <begin position="4912"/>
        <end position="4970"/>
    </location>
</feature>
<feature type="domain" description="FIVAR 40">
    <location>
        <begin position="5038"/>
        <end position="5096"/>
    </location>
</feature>
<feature type="domain" description="FIVAR 41">
    <location>
        <begin position="5164"/>
        <end position="5222"/>
    </location>
</feature>
<feature type="domain" description="FIVAR 42">
    <location>
        <begin position="5290"/>
        <end position="5344"/>
    </location>
</feature>
<feature type="domain" description="FIVAR 43">
    <location>
        <begin position="5412"/>
        <end position="5471"/>
    </location>
</feature>
<feature type="domain" description="FIVAR 44">
    <location>
        <begin position="5666"/>
        <end position="5722"/>
    </location>
</feature>
<feature type="region of interest" description="Disordered" evidence="2">
    <location>
        <begin position="6616"/>
        <end position="6713"/>
    </location>
</feature>
<feature type="compositionally biased region" description="Basic and acidic residues" evidence="2">
    <location>
        <begin position="6631"/>
        <end position="6641"/>
    </location>
</feature>
<feature type="compositionally biased region" description="Basic and acidic residues" evidence="2">
    <location>
        <begin position="6680"/>
        <end position="6690"/>
    </location>
</feature>
<feature type="compositionally biased region" description="Basic residues" evidence="2">
    <location>
        <begin position="6695"/>
        <end position="6713"/>
    </location>
</feature>
<feature type="helix" evidence="4">
    <location>
        <begin position="757"/>
        <end position="765"/>
    </location>
</feature>
<feature type="helix" evidence="4">
    <location>
        <begin position="767"/>
        <end position="772"/>
    </location>
</feature>
<feature type="helix" evidence="4">
    <location>
        <begin position="774"/>
        <end position="777"/>
    </location>
</feature>
<feature type="helix" evidence="4">
    <location>
        <begin position="781"/>
        <end position="800"/>
    </location>
</feature>
<feature type="helix" evidence="4">
    <location>
        <begin position="809"/>
        <end position="824"/>
    </location>
</feature>
<feature type="helix" evidence="4">
    <location>
        <begin position="827"/>
        <end position="842"/>
    </location>
</feature>
<feature type="helix" evidence="4">
    <location>
        <begin position="850"/>
        <end position="862"/>
    </location>
</feature>
<feature type="helix" evidence="4">
    <location>
        <begin position="866"/>
        <end position="889"/>
    </location>
</feature>
<feature type="turn" evidence="4">
    <location>
        <begin position="890"/>
        <end position="892"/>
    </location>
</feature>
<feature type="helix" evidence="4">
    <location>
        <begin position="893"/>
        <end position="898"/>
    </location>
</feature>
<feature type="helix" evidence="4">
    <location>
        <begin position="900"/>
        <end position="903"/>
    </location>
</feature>
<feature type="helix" evidence="4">
    <location>
        <begin position="907"/>
        <end position="924"/>
    </location>
</feature>
<feature type="turn" evidence="4">
    <location>
        <begin position="926"/>
        <end position="928"/>
    </location>
</feature>
<feature type="helix" evidence="4">
    <location>
        <begin position="934"/>
        <end position="948"/>
    </location>
</feature>
<feature type="helix" evidence="4">
    <location>
        <begin position="953"/>
        <end position="969"/>
    </location>
</feature>
<feature type="helix" evidence="4">
    <location>
        <begin position="976"/>
        <end position="988"/>
    </location>
</feature>
<feature type="helix" evidence="4">
    <location>
        <begin position="992"/>
        <end position="1003"/>
    </location>
</feature>
<gene>
    <name type="primary">ebhA</name>
    <name type="ordered locus">SAV1434</name>
</gene>
<keyword id="KW-0002">3D-structure</keyword>
<keyword id="KW-1003">Cell membrane</keyword>
<keyword id="KW-0472">Membrane</keyword>
<keyword id="KW-0677">Repeat</keyword>
<keyword id="KW-0812">Transmembrane</keyword>
<keyword id="KW-1133">Transmembrane helix</keyword>
<comment type="subcellular location">
    <subcellularLocation>
        <location evidence="3">Cell membrane</location>
        <topology evidence="3">Single-pass membrane protein</topology>
    </subcellularLocation>
</comment>
<comment type="caution">
    <text evidence="3">In strains Mu3, Mu50, N315 and Newman, ebh is divided into two ORFs, ebhA and ebhB, which correspond to the C-terminal and N-terminal parts of the full gene, respectively.</text>
</comment>
<reference key="1">
    <citation type="journal article" date="2001" name="Lancet">
        <title>Whole genome sequencing of meticillin-resistant Staphylococcus aureus.</title>
        <authorList>
            <person name="Kuroda M."/>
            <person name="Ohta T."/>
            <person name="Uchiyama I."/>
            <person name="Baba T."/>
            <person name="Yuzawa H."/>
            <person name="Kobayashi I."/>
            <person name="Cui L."/>
            <person name="Oguchi A."/>
            <person name="Aoki K."/>
            <person name="Nagai Y."/>
            <person name="Lian J.-Q."/>
            <person name="Ito T."/>
            <person name="Kanamori M."/>
            <person name="Matsumaru H."/>
            <person name="Maruyama A."/>
            <person name="Murakami H."/>
            <person name="Hosoyama A."/>
            <person name="Mizutani-Ui Y."/>
            <person name="Takahashi N.K."/>
            <person name="Sawano T."/>
            <person name="Inoue R."/>
            <person name="Kaito C."/>
            <person name="Sekimizu K."/>
            <person name="Hirakawa H."/>
            <person name="Kuhara S."/>
            <person name="Goto S."/>
            <person name="Yabuzaki J."/>
            <person name="Kanehisa M."/>
            <person name="Yamashita A."/>
            <person name="Oshima K."/>
            <person name="Furuya K."/>
            <person name="Yoshino C."/>
            <person name="Shiba T."/>
            <person name="Hattori M."/>
            <person name="Ogasawara N."/>
            <person name="Hayashi H."/>
            <person name="Hiramatsu K."/>
        </authorList>
    </citation>
    <scope>NUCLEOTIDE SEQUENCE [LARGE SCALE GENOMIC DNA]</scope>
    <source>
        <strain>Mu50 / ATCC 700699</strain>
    </source>
</reference>
<reference key="2">
    <citation type="journal article" date="2008" name="Structure">
        <title>A helical string of alternately connected three-helix bundles for the cell wall-associated adhesion protein ebh from Staphylococcus aureus.</title>
        <authorList>
            <person name="Tanaka Y."/>
            <person name="Sakamoto S."/>
            <person name="Kuroda M."/>
            <person name="Goda S."/>
            <person name="Gao Y.-G."/>
            <person name="Tsumoto K."/>
            <person name="Hiragi Y."/>
            <person name="Yao M."/>
            <person name="Watanabe N."/>
            <person name="Ohta T."/>
            <person name="Tanaka I."/>
        </authorList>
    </citation>
    <scope>X-RAY CRYSTALLOGRAPHY (2.35 ANGSTROMS) OF 756-1003</scope>
</reference>
<proteinExistence type="evidence at protein level"/>
<protein>
    <recommendedName>
        <fullName>Extracellular matrix-binding protein EbhA</fullName>
    </recommendedName>
    <alternativeName>
        <fullName>ECM-binding protein homolog A</fullName>
    </alternativeName>
</protein>
<accession>Q931R6</accession>
<dbReference type="EMBL" id="BA000017">
    <property type="protein sequence ID" value="BAB57596.1"/>
    <property type="molecule type" value="Genomic_DNA"/>
</dbReference>
<dbReference type="PDB" id="2DGJ">
    <property type="method" value="X-ray"/>
    <property type="resolution" value="2.35 A"/>
    <property type="chains" value="A/B=756-1003"/>
</dbReference>
<dbReference type="PDBsum" id="2DGJ"/>
<dbReference type="SMR" id="Q931R6"/>
<dbReference type="KEGG" id="sav:SAV1434"/>
<dbReference type="HOGENOM" id="CLU_000041_0_0_9"/>
<dbReference type="EvolutionaryTrace" id="Q931R6"/>
<dbReference type="Proteomes" id="UP000002481">
    <property type="component" value="Chromosome"/>
</dbReference>
<dbReference type="GO" id="GO:0005886">
    <property type="term" value="C:plasma membrane"/>
    <property type="evidence" value="ECO:0007669"/>
    <property type="project" value="UniProtKB-SubCell"/>
</dbReference>
<dbReference type="Gene3D" id="1.20.120.1850">
    <property type="entry name" value="Ebh helix bundles repeating unit (S and A modules)"/>
    <property type="match status" value="7"/>
</dbReference>
<dbReference type="Gene3D" id="1.20.5.420">
    <property type="entry name" value="Immunoglobulin FC, subunit C"/>
    <property type="match status" value="78"/>
</dbReference>
<dbReference type="InterPro" id="IPR011439">
    <property type="entry name" value="DUF1542"/>
</dbReference>
<dbReference type="InterPro" id="IPR051197">
    <property type="entry name" value="ECM-binding_protein"/>
</dbReference>
<dbReference type="InterPro" id="IPR020840">
    <property type="entry name" value="Extracell_matrix-bd_GA"/>
</dbReference>
<dbReference type="InterPro" id="IPR002988">
    <property type="entry name" value="GA_module"/>
</dbReference>
<dbReference type="InterPro" id="IPR009063">
    <property type="entry name" value="Ig/albumin-bd_sf"/>
</dbReference>
<dbReference type="PANTHER" id="PTHR33150">
    <property type="entry name" value="EXTRACELLULAR MATRIX-BINDING PROTEIN EBH"/>
    <property type="match status" value="1"/>
</dbReference>
<dbReference type="PANTHER" id="PTHR33150:SF1">
    <property type="entry name" value="EXTRACELLULAR MATRIX-BINDING PROTEIN EBH"/>
    <property type="match status" value="1"/>
</dbReference>
<dbReference type="Pfam" id="PF07564">
    <property type="entry name" value="DUF1542"/>
    <property type="match status" value="8"/>
</dbReference>
<dbReference type="Pfam" id="PF07554">
    <property type="entry name" value="FIVAR"/>
    <property type="match status" value="39"/>
</dbReference>
<dbReference type="Pfam" id="PF01468">
    <property type="entry name" value="GA"/>
    <property type="match status" value="11"/>
</dbReference>
<dbReference type="SMART" id="SM00844">
    <property type="entry name" value="GA"/>
    <property type="match status" value="46"/>
</dbReference>
<dbReference type="SUPFAM" id="SSF46997">
    <property type="entry name" value="Bacterial immunoglobulin/albumin-binding domains"/>
    <property type="match status" value="91"/>
</dbReference>
<evidence type="ECO:0000255" key="1"/>
<evidence type="ECO:0000256" key="2">
    <source>
        <dbReference type="SAM" id="MobiDB-lite"/>
    </source>
</evidence>
<evidence type="ECO:0000305" key="3"/>
<evidence type="ECO:0007829" key="4">
    <source>
        <dbReference type="PDB" id="2DGJ"/>
    </source>
</evidence>
<sequence length="6713" mass="722318">MGNLQTAINDKSGTLASQNFLDADEQKRNAYNQAISAAETILNKQTGPNTAKTAVEQALNNVNSAKHALNGTQNLNNAKQAAITAINGASDLNQKQKDALKAQANGAQRVSNANDVQRNATELNTAMGQLQHAIADKTNTLASSKYVNADSTKQNAYTTKVTNAEHIISGTPTVVTTPSEVTAAANQVNSAKQELNGDERLRVAKQNANTAIDALTQLNTPQKAKLKEQVGQANRLEDVQSVQTNGQSLNNAMKGLRDSIANETTVKASQNYTDASPNNQSTYNSAVSNAKGIINQTNNPTMDTSAITQATTQVNNAKNGLNGAENLRNAQNTAKQNLNTLSHLTNNQKSAISSQIDRAGHVSEVTAAKNAATELNAQMGNLEQAIHDQNTVKQGVNFTDADKAKRDAYTNAVSRAETILNKTQGANTSKQDVEAAIQNVTSAKNALNGDQNVTNAKNAAKNALNNLTSINNAQKRDLTTKIDQATTVAGVEAVSNTGTQLNTAMANLQNGINDKANTLASENYHDADSDKKTAYTQAVTNAENILNKNSGSNLDKAAVENALSQVTNAKGALNGNHNLEQAKSNANTTINGLQHLTTAQKDKLKQQVQQAQNVAGVDTVKSSANTLNGAMGTLRNSIQDNTATKNGQNYLDATERNKTNYNNAVDSANGVINATSNPNMDANAINQIATQVTSTKNALDGTHNLTQAKQTATNAIDGATNLNKAQKDALKAQVTSAQRVANVTSIQQTANELNTAMGQLQHGIDDENATKQTQKYRDAEQSKKTAYDQAVAAAKAILNKQTGSNSDKAAVDRALQQVTSTKDALNGDAKLAEAKAAARQNLGTLNHITNAQRTALEGQINQATTVDGVNTVKTNANTLDGAMNSLQGAINDKDATLRNQNYLDADESKRNAYTQAVTAAEGILNKQTGGNTSKADVDNALNAVTRAKAALNGAENLRNAKTSATNTINGLPNLTQLQKDNLKHQVEQAQNVVGVNGVKDKGNTLNTAMGALRTSIQNDNTTKTSQNYLDASDSNKNNYNTAVNNANGVINATNNPNMDANAINDMANQVNTTKAALNGAQNLAQAKTNATNTINNAQDLNQKQKDALKTQVNNAQRVSDANNVQHTATELNGAMTALKAAIADKERTKASGNYVNADQEKRQAYDSKVTNAENIINGTPNATLTVNDVNSAASQVNAAKTALNGDNNLRVAKEHANNTIDGLAQLNNVQKAKLKEQVQSATTLDGVQTVKNSSQTLNTAMKGLRDSIANEATIKAGQNYTDASPNNRNEYDSAVTAAKAIINQTSNPTMEPNTITQATSQVTTKEHALNGAQNLAQAKTTAKNNLNNLTSINNAQKDALTRNIDGATTVAGVNQETAKATELNNAMHSLQNGINDETQTKQTQKYLDAEPSKKSAYDQAVNAAKAILTKASGQNVDKAAVEQALQNVNSTKTALNGDAKLNEAKAAAKQTLGTLTHINNAQRNALDNEITQATNVEGVNTVKAKAQQLDGAMGQLETSIRDKDTTLQSQNYQDADDAKRTAYSQAVNAAATILNKTAGGNTPKADVERAMQAVTQANTALNGIQNLERAKQAANTAITNASDLNTKQKEALKAQVTSAGRVSAANGVEHTATELNTAMTALKRAIADKADTKASGNYVNADANKRQAYDEKVTAAEHIVSGTPTPTLTPSDVTNAATQVTNAKTQLNGNHNLEVAKQNANTAIDGLTSLNGPQKAKLKEQVGQATTLPNVQTVRDNAQTLNTAMKGLRDSIANEATIKAGQNYTDASQNKQNDYNNAVTAAKAIIGQTTSPSMIAQEINQAKDQVTAKQQALNGQENLRTAQTNAKQHLNGLSDLTNAQKDAAKRQIEGATHVNEVTQAQNNADALNTAMTNLKNGIQDQNTIKQGVNFTDADEAKRNAYTNAVTQAEQILNKAQGPNTAKDGVETALQNVQRAKNELNGNQNVANAKTTAKNALNNLTSINNAQKAALKSQIEGATTVAGVNQVSTMASELNTAMSNLQRGINDEAATKAAQKYTEADRDKQTAYNDAVTAAKTLLDKTAGSNDNKVAVEQALQRVNTAKTALNGDARLNEAKNTAKQQLATMSHLTNAQKANLTEQIERGTTVAGVQGIQANAGTLNQAMNQLRQSIASKDATKSSEDYQDANADLQNAYNDAVTNAEGIISATNNPEMNPDTINQKASQVNSAKSALNGDEKLAAVKQTAKSDIGRLTDLNNAQRTAANAEVDQAPNLAAVTAAKNKATSLNTAMGNLKHALAEKDNTKRSVNYTDADQPKQQAYDTAVTQAEAITNANGSNANETQVQAALNQLNQAKNDLNGDNKVAQAKETAKRALASYSNLNNAQSTAATSQIDNATTVADVTAAQNTANELNTAMGQLQNGINDQNTVKQQVNFTDADQGKKDAYTNAVTNAQGILDKANGQNMTKAQVEAALNQVTTAKNALNGDANVRQAKSDAKANLGTLTHLNNAQKQDLTSQIEGATTVNGVNSVKTKAQDLDGAMQRLESAIANKDQTKASENYIDADPTKKTAFDNAITQAESYLNKDHGTNKDKQAVEQAIQSVTSTENALNGDANLQCAKTEATQAIDNLTQLNTPQKTALKQQVNAAQRVSGVTDLKNSATSLNNAMDQLKQAIGDHDTIVAGGNYTNASPDKQGAYTDAYNAAKNIVNGSPNVITNAADVTAATQRVNNAETSLNGDTNLATAKQQAKDALRQMTHLSDAQKQSITGQIDSATQVTGVQSVKDNATNLDNAMNQLRNSIANKDEVKASQPYVDADTDKQNAYNTAVTSAENIINATSQPTLDPSAVTQAANQVNTNKTALNGAQNLANKKQETTANINRLSHLNNAQKQDLNTQVTNAPNISTVNQVKTKAEQLDQAMERLINGIQDKDQVKQSVNFTDADPEKQTAYNNAVTAAENIINQANGTNANQSQVEAALSTVTTTKQALNGDRKVTDAKNNANQTLSTLDNLNNAQKGAVTGNINQAHTVAEVTQAIQTAQELNTAMGNLKNSLNDKDTTLGSQNFADADPEKKNAYNEAVRNAENILNKSTGTNVPKDQVEAAMNQVNTTKAALNGTQNLEKAKQHANTAIDGLSHLTNAQKEALKQLVQQSTTVAEAQGNEQKANNVDAAMDKLRQSIADNATTKQNQNYTDASPNKKDAYNNAVTTAQGIIDQTTNPSLDPTVINQAAGQVSTSKNALNGNENLEAAKQQATQSLGSLDNLNNAQKQAVTNQINGAHTVDEANQIKQNAQNLNTAMGNLKQAIADKDATKATVNFTDADQAKQQAYNTAVTNAENIISKANGGNATQTEVEQAIQQVNAAKQALNGNANVQHAKDEATALINNSNDLNQAQKDALKQQVQNATTVAGVNNVKQTAQELNNAMTQLKQGIADKEQTKADGNFVNADSDKQNAYNQAVAKAEALISGTPDVVVTPSEITAALNKVTQAKNDLNGNTNLATAKQNVQHAIDQLPNLNQAQRDEYSKQITQATLVPNVNAIQQAATTLNDAMTQLKQGIANKAQIKGSENYHDADTDKQTAYDNAVTKAEELLKQTTNPTMDPNTIQQALTKVNDTNQALNGNQKLADAKQDAKTTLGTLDHLNDAQKQALTTQVEQAPDIATVNNVKQNAQNLNNAMTNLNNALQDKTETLNSINFTDADQAKKDDYTNAVSHAEGILSKANGSNASQTEVEQAMQRVNEAKQALNGNDNVQRAKDAAKQVITNANDLNQAQKDALKQQVDAAQTVANVNTIKQTAQDLNQAMTQLKQGIADKDQTKANGNFVNADTDKQNAYNNAVAHAEQIISGTPNANVDPQQVAQALQQVNQAKGDLNGNHNLQVAKDNANTAIDQLPNLNQPQKTALKDQVSHAELVTGVNAIKQNADALNNAMGTLKQQIQANSQVPQSVDFTQADQDKQQAYNNAANQAQQIANGTPTPVLAPDTVTKAVTTMNQAKDALNGDEKLAQAKQDALANLDTLRDLNQPQRDALRNQINQAQALATVEQTKQNAQNVNTAMGNLKQGIANKDTVKASENYHDADVDKQTAYTNAVSQAEGIINQTTNPTLNPDDITRALTQVTDAKNSLNGEAKLATEKQNAKDAVSGMTHLNDAQKQALKGQIDQSPEIATVNQVKQTATSLDQAMDQLSQAINDKDQILADGNYLNADPDKQNAYKQAVAKAEALLNKQSGTNEVQAQVESITNEVNAAKQALNGNDNLANAKQQAKQQLANLTHLNDAQKQSFESQITQAPLVTDVTTINQKAQTLDHAMELLRNSVADNQTTLASEDYHDATAQRQNDYNKAVTAANNIINQTTSPTMNPDDVNGATTQVNNTKVALDGDENLAAAKQQANNRLDQLDHLNNAQKQQLQSQITQSSDIAAVNGHKQTAESLNTAMGNLINAIADHQAVEQRGNFINADTDKQTAYNTAVNEAAAMINKQTGQNANQTEVEQAITKVQTTLQALNGDHNLQVAKTNATQAIDVLTSLNDPQKTALKDQVTAATLVTAVHQIEQNANTLNQAMHGLRQSIQDNAATKANSKYINEDQPEQQNYDQAVQAANNIINEQTATLDNNAINQVAATVNTTKAALHGDVKLQNDKDHAKQTVSQLAHLNNAQKHMEDTLIDSETTRTAVKQDLTEVQALDQLMDALQQSIADKDATRASSAYVNAEPNKKQAYDEAVQNAESIIAGLNNPTINKGNVSSATQAVISSKNALDGVERLAQDKQTAGNSLNHLDQLTPAQQQALENQINNATTCDKVAEIIAQAQALNEAMKALKESIKDQPQTEASSKFINEDQAQKDAYTQAVQHAKDLINKTTDPTLAKSIIDQATQAVTDAKNNLHGDQKLAQDKQRATETLNNLSNLNTPQRQALENQINNAATRGEVAQKLTEAQALNQAMEALRNSIQDQQQTESGSKFINEDKPQKDAYQAAVQNAKDLINQTGNPTLDKAQVEQLTHAFKQAKDNLHGDQKLADDKQHAVTDLNQLNGLNNPQRQALESQINNAATRGEVAQKLAEAKALDQAMQALRNSIQDQQQTEAGSKFINEDKPQKDAYQAAVQNAKDLINQTGNPTLDKSQVEQLTQAVTTAKDNLHGDQKLARDQQQAVTTVNALPNLNHAQQQTLTDAINAAPTRTEVAQHVQTATELDHAMETLKNKVDQVNTDKAQPNYTEASTDKKEAVDQALQAAQSITDPTNGSNANKDAVEQALTKLQEKVNELNGNERVAEAKTQAKQTIDQLTHLNADQIATAKQNIDQATKLQPIAELVDQATQLNQSMDQLQQAVNEHANVEQTIDYTQADSDKQKAYKQAIADAENVLKQNANKQQVDQALQNILNAKQALNGDERVALAKTNGKHDIDQLNALNNAQQDGFKGRIDQSNDLNQIQQIVDEAKALNRAMDQLSQEITGNEGRTKGSTNYVNADTQVKQVYDEAVDKAKQALDKSSGQNLTAEQVIKLNDAVTAAKKALNGEERLNNRKAEALQRLDQLTHLNNAQRQLAIQQINNAETLNKASRAINRATKLDNAMGAVQQYIDEQHLGVISSTNYINADDNLKANYDNAIANAAHELDKVQGNAIAKAEAEQLKQNIIDAQNALNGDQNLANAKDKANAFVNSLNGLNQQQQDLAHKAINNADTVSDVTDIVNNQIDLNDAMETLKHLVDNEIPNAEQTVNYQNADDNAKTNFDDAKRLANTLLNSDNTNVNDINGAIQAVNDAIHNLNGDQRLQDAKDKAIQSINQALANKLKEIEASNATDQDKLIAKNKAEELANSIINNINKATSNQAVSQVQTAGNHAIEQVHANEIPKAKIDANKDVDKQVQALIDEIDRNPNLTDKEKQALKDRINQILQQGHNDINNALTKEEIEQAKAQLAQALQDIKDLVKAKEDAKQDVDKQVQALIDEIDQNPNLTDKEKQALKDRINQILQQGHNGINNAMTKEEIEQAKAQLAQALKEIKDLVKAKENAKQDVDKQVQALIDEIDQNPNLTDKEKQALKDRINQILQQGHNDINNAMTKEEIEQAKAQLAQALQDIKDLVKAKEDAKNAIKALANAKRDQINSNPDLTPEQKAKALKEIDEAEKRALQNVENAQTIDQLNRGLNLGLDDIRNTHVWEVDEQPAVNEIFEATPEQILVNGELIVHRDDIITEQDILAHINLIDQLSAEVIDTPSTATISDSLTAKVEVTLLDGSKVIVNVPVKVVEKELSVVKQQAIESIENAAQQKIDEINNSVTLTLEQKEAAIAEVNKLKQQAIDHVNNAPDVHSVEEIQQQEQAYIEQFNPEQFTIEQAKSNAIKSIEDAIQHMIDEIKARTDLTDKEKQEAIAKLNQLKEQAIQAIQRAQSISEITEQLEQFKAQMKAANPTAKELAKRKQEAISRIKDFSNEKINSIRNSEIGTADEKQAAMNQINEIVLETIRDINNAHTLQQVEAALNNGIARISAVQIVISDRAKQSSSTGNESNSHLTIGYGTANHPFNSSTIGHKKKLDEDDDIDPLHMRHFSNNFGNVIKNAIGVVGISGLLASFWFFIAKRRRKEDEEEELEIRDNNKDSIKETLDDTKHLPLLFAKRRRKEDEEDVTVEEKDSLNNGESLDKVKHTPFFLPKRRRKEDEEDVEVTNENTDEKVLKDNEHSPLLFAKRRKDKEEDVETTTSIESKDEDVPLLLAKKKNQKDNQSKDKKSASKNTSKKVAAKKKKKKSKKNKK</sequence>